<sequence length="143" mass="14982">MAKKIIGYIKLQVPAGKANPSPPIGPALGQRGLNIMEFCKAFNAKTQGLEPGLPIPVVITAFADKSFTFIMKTPPATILIKKAAGIQKGSPKPHTDKVGSISRAQVEEIAKTKMPDLTAADMEAAVRTIAGSARSMGITVEGL</sequence>
<organism>
    <name type="scientific">Azoarcus sp. (strain BH72)</name>
    <dbReference type="NCBI Taxonomy" id="418699"/>
    <lineage>
        <taxon>Bacteria</taxon>
        <taxon>Pseudomonadati</taxon>
        <taxon>Pseudomonadota</taxon>
        <taxon>Betaproteobacteria</taxon>
        <taxon>Rhodocyclales</taxon>
        <taxon>Zoogloeaceae</taxon>
        <taxon>Azoarcus</taxon>
    </lineage>
</organism>
<reference key="1">
    <citation type="journal article" date="2006" name="Nat. Biotechnol.">
        <title>Complete genome of the mutualistic, N2-fixing grass endophyte Azoarcus sp. strain BH72.</title>
        <authorList>
            <person name="Krause A."/>
            <person name="Ramakumar A."/>
            <person name="Bartels D."/>
            <person name="Battistoni F."/>
            <person name="Bekel T."/>
            <person name="Boch J."/>
            <person name="Boehm M."/>
            <person name="Friedrich F."/>
            <person name="Hurek T."/>
            <person name="Krause L."/>
            <person name="Linke B."/>
            <person name="McHardy A.C."/>
            <person name="Sarkar A."/>
            <person name="Schneiker S."/>
            <person name="Syed A.A."/>
            <person name="Thauer R."/>
            <person name="Vorhoelter F.-J."/>
            <person name="Weidner S."/>
            <person name="Puehler A."/>
            <person name="Reinhold-Hurek B."/>
            <person name="Kaiser O."/>
            <person name="Goesmann A."/>
        </authorList>
    </citation>
    <scope>NUCLEOTIDE SEQUENCE [LARGE SCALE GENOMIC DNA]</scope>
    <source>
        <strain>BH72</strain>
    </source>
</reference>
<gene>
    <name evidence="1" type="primary">rplK</name>
    <name type="ordered locus">azo3428</name>
</gene>
<accession>A1KB38</accession>
<feature type="chain" id="PRO_1000046140" description="Large ribosomal subunit protein uL11">
    <location>
        <begin position="1"/>
        <end position="143"/>
    </location>
</feature>
<name>RL11_AZOSB</name>
<protein>
    <recommendedName>
        <fullName evidence="1">Large ribosomal subunit protein uL11</fullName>
    </recommendedName>
    <alternativeName>
        <fullName evidence="2">50S ribosomal protein L11</fullName>
    </alternativeName>
</protein>
<dbReference type="EMBL" id="AM406670">
    <property type="protein sequence ID" value="CAL96044.1"/>
    <property type="molecule type" value="Genomic_DNA"/>
</dbReference>
<dbReference type="RefSeq" id="WP_011767151.1">
    <property type="nucleotide sequence ID" value="NC_008702.1"/>
</dbReference>
<dbReference type="SMR" id="A1KB38"/>
<dbReference type="STRING" id="62928.azo3428"/>
<dbReference type="KEGG" id="aoa:dqs_3567"/>
<dbReference type="KEGG" id="azo:azo3428"/>
<dbReference type="eggNOG" id="COG0080">
    <property type="taxonomic scope" value="Bacteria"/>
</dbReference>
<dbReference type="HOGENOM" id="CLU_074237_2_0_4"/>
<dbReference type="OrthoDB" id="9802408at2"/>
<dbReference type="Proteomes" id="UP000002588">
    <property type="component" value="Chromosome"/>
</dbReference>
<dbReference type="GO" id="GO:0022625">
    <property type="term" value="C:cytosolic large ribosomal subunit"/>
    <property type="evidence" value="ECO:0007669"/>
    <property type="project" value="TreeGrafter"/>
</dbReference>
<dbReference type="GO" id="GO:0070180">
    <property type="term" value="F:large ribosomal subunit rRNA binding"/>
    <property type="evidence" value="ECO:0007669"/>
    <property type="project" value="UniProtKB-UniRule"/>
</dbReference>
<dbReference type="GO" id="GO:0003735">
    <property type="term" value="F:structural constituent of ribosome"/>
    <property type="evidence" value="ECO:0007669"/>
    <property type="project" value="InterPro"/>
</dbReference>
<dbReference type="GO" id="GO:0006412">
    <property type="term" value="P:translation"/>
    <property type="evidence" value="ECO:0007669"/>
    <property type="project" value="UniProtKB-UniRule"/>
</dbReference>
<dbReference type="CDD" id="cd00349">
    <property type="entry name" value="Ribosomal_L11"/>
    <property type="match status" value="1"/>
</dbReference>
<dbReference type="FunFam" id="1.10.10.250:FF:000001">
    <property type="entry name" value="50S ribosomal protein L11"/>
    <property type="match status" value="1"/>
</dbReference>
<dbReference type="FunFam" id="3.30.1550.10:FF:000001">
    <property type="entry name" value="50S ribosomal protein L11"/>
    <property type="match status" value="1"/>
</dbReference>
<dbReference type="Gene3D" id="1.10.10.250">
    <property type="entry name" value="Ribosomal protein L11, C-terminal domain"/>
    <property type="match status" value="1"/>
</dbReference>
<dbReference type="Gene3D" id="3.30.1550.10">
    <property type="entry name" value="Ribosomal protein L11/L12, N-terminal domain"/>
    <property type="match status" value="1"/>
</dbReference>
<dbReference type="HAMAP" id="MF_00736">
    <property type="entry name" value="Ribosomal_uL11"/>
    <property type="match status" value="1"/>
</dbReference>
<dbReference type="InterPro" id="IPR000911">
    <property type="entry name" value="Ribosomal_uL11"/>
</dbReference>
<dbReference type="InterPro" id="IPR006519">
    <property type="entry name" value="Ribosomal_uL11_bac-typ"/>
</dbReference>
<dbReference type="InterPro" id="IPR020783">
    <property type="entry name" value="Ribosomal_uL11_C"/>
</dbReference>
<dbReference type="InterPro" id="IPR036769">
    <property type="entry name" value="Ribosomal_uL11_C_sf"/>
</dbReference>
<dbReference type="InterPro" id="IPR020785">
    <property type="entry name" value="Ribosomal_uL11_CS"/>
</dbReference>
<dbReference type="InterPro" id="IPR020784">
    <property type="entry name" value="Ribosomal_uL11_N"/>
</dbReference>
<dbReference type="InterPro" id="IPR036796">
    <property type="entry name" value="Ribosomal_uL11_N_sf"/>
</dbReference>
<dbReference type="NCBIfam" id="TIGR01632">
    <property type="entry name" value="L11_bact"/>
    <property type="match status" value="1"/>
</dbReference>
<dbReference type="PANTHER" id="PTHR11661">
    <property type="entry name" value="60S RIBOSOMAL PROTEIN L12"/>
    <property type="match status" value="1"/>
</dbReference>
<dbReference type="PANTHER" id="PTHR11661:SF1">
    <property type="entry name" value="LARGE RIBOSOMAL SUBUNIT PROTEIN UL11M"/>
    <property type="match status" value="1"/>
</dbReference>
<dbReference type="Pfam" id="PF00298">
    <property type="entry name" value="Ribosomal_L11"/>
    <property type="match status" value="1"/>
</dbReference>
<dbReference type="Pfam" id="PF03946">
    <property type="entry name" value="Ribosomal_L11_N"/>
    <property type="match status" value="1"/>
</dbReference>
<dbReference type="SMART" id="SM00649">
    <property type="entry name" value="RL11"/>
    <property type="match status" value="1"/>
</dbReference>
<dbReference type="SUPFAM" id="SSF54747">
    <property type="entry name" value="Ribosomal L11/L12e N-terminal domain"/>
    <property type="match status" value="1"/>
</dbReference>
<dbReference type="SUPFAM" id="SSF46906">
    <property type="entry name" value="Ribosomal protein L11, C-terminal domain"/>
    <property type="match status" value="1"/>
</dbReference>
<dbReference type="PROSITE" id="PS00359">
    <property type="entry name" value="RIBOSOMAL_L11"/>
    <property type="match status" value="1"/>
</dbReference>
<proteinExistence type="inferred from homology"/>
<keyword id="KW-0488">Methylation</keyword>
<keyword id="KW-1185">Reference proteome</keyword>
<keyword id="KW-0687">Ribonucleoprotein</keyword>
<keyword id="KW-0689">Ribosomal protein</keyword>
<keyword id="KW-0694">RNA-binding</keyword>
<keyword id="KW-0699">rRNA-binding</keyword>
<comment type="function">
    <text evidence="1">Forms part of the ribosomal stalk which helps the ribosome interact with GTP-bound translation factors.</text>
</comment>
<comment type="subunit">
    <text evidence="1">Part of the ribosomal stalk of the 50S ribosomal subunit. Interacts with L10 and the large rRNA to form the base of the stalk. L10 forms an elongated spine to which L12 dimers bind in a sequential fashion forming a multimeric L10(L12)X complex.</text>
</comment>
<comment type="PTM">
    <text evidence="1">One or more lysine residues are methylated.</text>
</comment>
<comment type="similarity">
    <text evidence="1">Belongs to the universal ribosomal protein uL11 family.</text>
</comment>
<evidence type="ECO:0000255" key="1">
    <source>
        <dbReference type="HAMAP-Rule" id="MF_00736"/>
    </source>
</evidence>
<evidence type="ECO:0000305" key="2"/>